<protein>
    <recommendedName>
        <fullName evidence="1">3-deoxy-manno-octulosonate cytidylyltransferase</fullName>
        <ecNumber evidence="1">2.7.7.38</ecNumber>
    </recommendedName>
    <alternativeName>
        <fullName evidence="1">CMP-2-keto-3-deoxyoctulosonic acid synthase</fullName>
        <shortName evidence="1">CKS</shortName>
        <shortName evidence="1">CMP-KDO synthase</shortName>
    </alternativeName>
</protein>
<gene>
    <name evidence="1" type="primary">kdsB</name>
    <name type="ordered locus">CPn_0235</name>
    <name type="ordered locus">CP_0527</name>
    <name type="ordered locus">CpB0241</name>
</gene>
<proteinExistence type="inferred from homology"/>
<feature type="chain" id="PRO_0000188499" description="3-deoxy-manno-octulosonate cytidylyltransferase">
    <location>
        <begin position="1"/>
        <end position="254"/>
    </location>
</feature>
<accession>Q9Z8U9</accession>
<accession>Q9JQ61</accession>
<reference key="1">
    <citation type="journal article" date="1999" name="Nat. Genet.">
        <title>Comparative genomes of Chlamydia pneumoniae and C. trachomatis.</title>
        <authorList>
            <person name="Kalman S."/>
            <person name="Mitchell W.P."/>
            <person name="Marathe R."/>
            <person name="Lammel C.J."/>
            <person name="Fan J."/>
            <person name="Hyman R.W."/>
            <person name="Olinger L."/>
            <person name="Grimwood J."/>
            <person name="Davis R.W."/>
            <person name="Stephens R.S."/>
        </authorList>
    </citation>
    <scope>NUCLEOTIDE SEQUENCE [LARGE SCALE GENOMIC DNA]</scope>
    <source>
        <strain>CWL029</strain>
    </source>
</reference>
<reference key="2">
    <citation type="journal article" date="2000" name="Nucleic Acids Res.">
        <title>Genome sequences of Chlamydia trachomatis MoPn and Chlamydia pneumoniae AR39.</title>
        <authorList>
            <person name="Read T.D."/>
            <person name="Brunham R.C."/>
            <person name="Shen C."/>
            <person name="Gill S.R."/>
            <person name="Heidelberg J.F."/>
            <person name="White O."/>
            <person name="Hickey E.K."/>
            <person name="Peterson J.D."/>
            <person name="Utterback T.R."/>
            <person name="Berry K.J."/>
            <person name="Bass S."/>
            <person name="Linher K.D."/>
            <person name="Weidman J.F."/>
            <person name="Khouri H.M."/>
            <person name="Craven B."/>
            <person name="Bowman C."/>
            <person name="Dodson R.J."/>
            <person name="Gwinn M.L."/>
            <person name="Nelson W.C."/>
            <person name="DeBoy R.T."/>
            <person name="Kolonay J.F."/>
            <person name="McClarty G."/>
            <person name="Salzberg S.L."/>
            <person name="Eisen J.A."/>
            <person name="Fraser C.M."/>
        </authorList>
    </citation>
    <scope>NUCLEOTIDE SEQUENCE [LARGE SCALE GENOMIC DNA]</scope>
    <source>
        <strain>AR39</strain>
    </source>
</reference>
<reference key="3">
    <citation type="journal article" date="2000" name="Nucleic Acids Res.">
        <title>Comparison of whole genome sequences of Chlamydia pneumoniae J138 from Japan and CWL029 from USA.</title>
        <authorList>
            <person name="Shirai M."/>
            <person name="Hirakawa H."/>
            <person name="Kimoto M."/>
            <person name="Tabuchi M."/>
            <person name="Kishi F."/>
            <person name="Ouchi K."/>
            <person name="Shiba T."/>
            <person name="Ishii K."/>
            <person name="Hattori M."/>
            <person name="Kuhara S."/>
            <person name="Nakazawa T."/>
        </authorList>
    </citation>
    <scope>NUCLEOTIDE SEQUENCE [LARGE SCALE GENOMIC DNA]</scope>
    <source>
        <strain>J138</strain>
    </source>
</reference>
<reference key="4">
    <citation type="submission" date="2002-05" db="EMBL/GenBank/DDBJ databases">
        <title>The genome sequence of Chlamydia pneumoniae TW183 and comparison with other Chlamydia strains based on whole genome sequence analysis.</title>
        <authorList>
            <person name="Geng M.M."/>
            <person name="Schuhmacher A."/>
            <person name="Muehldorfer I."/>
            <person name="Bensch K.W."/>
            <person name="Schaefer K.P."/>
            <person name="Schneider S."/>
            <person name="Pohl T."/>
            <person name="Essig A."/>
            <person name="Marre R."/>
            <person name="Melchers K."/>
        </authorList>
    </citation>
    <scope>NUCLEOTIDE SEQUENCE [LARGE SCALE GENOMIC DNA]</scope>
    <source>
        <strain>TW-183</strain>
    </source>
</reference>
<keyword id="KW-0963">Cytoplasm</keyword>
<keyword id="KW-0448">Lipopolysaccharide biosynthesis</keyword>
<keyword id="KW-0548">Nucleotidyltransferase</keyword>
<keyword id="KW-0808">Transferase</keyword>
<sequence length="254" mass="28414">MKPEESECLCIGVLPARWNSSRYPGKPLAKIHGKSLIQRTYENASQSSLLDKIVVATDDQHIIDHVTDFGGYAVMTSPTCSNGTERTGEVARKYFPKAEIIVNIQGDEPCLNSEVVDALVQKLRSSPEAELVTPVALTTDREEILTEKKVKCVFDSEGRALYFSRSPIPFILKKATPVYLHIGVYAFKREALFRYLQHSSTPLSDAEDLEQLRFLEHGGKIHVCIVDAKSPSVDYPEDIAKVEQYITCLSNAYF</sequence>
<name>KDSB_CHLPN</name>
<comment type="function">
    <text evidence="1">Activates KDO (a required 8-carbon sugar) for incorporation into bacterial lipopolysaccharide in Gram-negative bacteria.</text>
</comment>
<comment type="catalytic activity">
    <reaction evidence="1">
        <text>3-deoxy-alpha-D-manno-oct-2-ulosonate + CTP = CMP-3-deoxy-beta-D-manno-octulosonate + diphosphate</text>
        <dbReference type="Rhea" id="RHEA:23448"/>
        <dbReference type="ChEBI" id="CHEBI:33019"/>
        <dbReference type="ChEBI" id="CHEBI:37563"/>
        <dbReference type="ChEBI" id="CHEBI:85986"/>
        <dbReference type="ChEBI" id="CHEBI:85987"/>
        <dbReference type="EC" id="2.7.7.38"/>
    </reaction>
</comment>
<comment type="pathway">
    <text evidence="1">Nucleotide-sugar biosynthesis; CMP-3-deoxy-D-manno-octulosonate biosynthesis; CMP-3-deoxy-D-manno-octulosonate from 3-deoxy-D-manno-octulosonate and CTP: step 1/1.</text>
</comment>
<comment type="pathway">
    <text evidence="1">Bacterial outer membrane biogenesis; lipopolysaccharide biosynthesis.</text>
</comment>
<comment type="subcellular location">
    <subcellularLocation>
        <location evidence="1">Cytoplasm</location>
    </subcellularLocation>
</comment>
<comment type="similarity">
    <text evidence="1">Belongs to the KdsB family.</text>
</comment>
<evidence type="ECO:0000255" key="1">
    <source>
        <dbReference type="HAMAP-Rule" id="MF_00057"/>
    </source>
</evidence>
<dbReference type="EC" id="2.7.7.38" evidence="1"/>
<dbReference type="EMBL" id="AE001363">
    <property type="protein sequence ID" value="AAD18388.1"/>
    <property type="molecule type" value="Genomic_DNA"/>
</dbReference>
<dbReference type="EMBL" id="AE002161">
    <property type="protein sequence ID" value="AAF38351.1"/>
    <property type="molecule type" value="Genomic_DNA"/>
</dbReference>
<dbReference type="EMBL" id="BA000008">
    <property type="protein sequence ID" value="BAA98445.1"/>
    <property type="molecule type" value="Genomic_DNA"/>
</dbReference>
<dbReference type="EMBL" id="AE009440">
    <property type="protein sequence ID" value="AAP98174.1"/>
    <property type="molecule type" value="Genomic_DNA"/>
</dbReference>
<dbReference type="PIR" id="C86520">
    <property type="entry name" value="C86520"/>
</dbReference>
<dbReference type="PIR" id="H72102">
    <property type="entry name" value="H72102"/>
</dbReference>
<dbReference type="RefSeq" id="NP_224444.1">
    <property type="nucleotide sequence ID" value="NC_000922.1"/>
</dbReference>
<dbReference type="RefSeq" id="WP_010882887.1">
    <property type="nucleotide sequence ID" value="NZ_LN847257.1"/>
</dbReference>
<dbReference type="SMR" id="Q9Z8U9"/>
<dbReference type="STRING" id="406984.CPK_ORF00744"/>
<dbReference type="GeneID" id="45050282"/>
<dbReference type="KEGG" id="cpa:CP_0527"/>
<dbReference type="KEGG" id="cpj:kdsB"/>
<dbReference type="KEGG" id="cpn:CPn_0235"/>
<dbReference type="KEGG" id="cpt:CpB0241"/>
<dbReference type="PATRIC" id="fig|115713.3.peg.265"/>
<dbReference type="eggNOG" id="COG1212">
    <property type="taxonomic scope" value="Bacteria"/>
</dbReference>
<dbReference type="HOGENOM" id="CLU_065038_0_1_0"/>
<dbReference type="OrthoDB" id="9815559at2"/>
<dbReference type="UniPathway" id="UPA00030"/>
<dbReference type="UniPathway" id="UPA00358">
    <property type="reaction ID" value="UER00476"/>
</dbReference>
<dbReference type="Proteomes" id="UP000000583">
    <property type="component" value="Chromosome"/>
</dbReference>
<dbReference type="Proteomes" id="UP000000801">
    <property type="component" value="Chromosome"/>
</dbReference>
<dbReference type="GO" id="GO:0005829">
    <property type="term" value="C:cytosol"/>
    <property type="evidence" value="ECO:0007669"/>
    <property type="project" value="TreeGrafter"/>
</dbReference>
<dbReference type="GO" id="GO:0008690">
    <property type="term" value="F:3-deoxy-manno-octulosonate cytidylyltransferase activity"/>
    <property type="evidence" value="ECO:0007669"/>
    <property type="project" value="UniProtKB-UniRule"/>
</dbReference>
<dbReference type="GO" id="GO:0033468">
    <property type="term" value="P:CMP-keto-3-deoxy-D-manno-octulosonic acid biosynthetic process"/>
    <property type="evidence" value="ECO:0007669"/>
    <property type="project" value="UniProtKB-UniRule"/>
</dbReference>
<dbReference type="GO" id="GO:0009103">
    <property type="term" value="P:lipopolysaccharide biosynthetic process"/>
    <property type="evidence" value="ECO:0007669"/>
    <property type="project" value="UniProtKB-UniRule"/>
</dbReference>
<dbReference type="CDD" id="cd02517">
    <property type="entry name" value="CMP-KDO-Synthetase"/>
    <property type="match status" value="1"/>
</dbReference>
<dbReference type="FunFam" id="3.90.550.10:FF:000011">
    <property type="entry name" value="3-deoxy-manno-octulosonate cytidylyltransferase"/>
    <property type="match status" value="1"/>
</dbReference>
<dbReference type="Gene3D" id="3.90.550.10">
    <property type="entry name" value="Spore Coat Polysaccharide Biosynthesis Protein SpsA, Chain A"/>
    <property type="match status" value="1"/>
</dbReference>
<dbReference type="HAMAP" id="MF_00057">
    <property type="entry name" value="KdsB"/>
    <property type="match status" value="1"/>
</dbReference>
<dbReference type="InterPro" id="IPR003329">
    <property type="entry name" value="Cytidylyl_trans"/>
</dbReference>
<dbReference type="InterPro" id="IPR004528">
    <property type="entry name" value="KdsB"/>
</dbReference>
<dbReference type="InterPro" id="IPR029044">
    <property type="entry name" value="Nucleotide-diphossugar_trans"/>
</dbReference>
<dbReference type="NCBIfam" id="TIGR00466">
    <property type="entry name" value="kdsB"/>
    <property type="match status" value="1"/>
</dbReference>
<dbReference type="NCBIfam" id="NF003950">
    <property type="entry name" value="PRK05450.1-3"/>
    <property type="match status" value="1"/>
</dbReference>
<dbReference type="NCBIfam" id="NF003952">
    <property type="entry name" value="PRK05450.1-5"/>
    <property type="match status" value="1"/>
</dbReference>
<dbReference type="NCBIfam" id="NF009905">
    <property type="entry name" value="PRK13368.1"/>
    <property type="match status" value="1"/>
</dbReference>
<dbReference type="PANTHER" id="PTHR42866">
    <property type="entry name" value="3-DEOXY-MANNO-OCTULOSONATE CYTIDYLYLTRANSFERASE"/>
    <property type="match status" value="1"/>
</dbReference>
<dbReference type="PANTHER" id="PTHR42866:SF2">
    <property type="entry name" value="3-DEOXY-MANNO-OCTULOSONATE CYTIDYLYLTRANSFERASE, MITOCHONDRIAL"/>
    <property type="match status" value="1"/>
</dbReference>
<dbReference type="Pfam" id="PF02348">
    <property type="entry name" value="CTP_transf_3"/>
    <property type="match status" value="1"/>
</dbReference>
<dbReference type="SUPFAM" id="SSF53448">
    <property type="entry name" value="Nucleotide-diphospho-sugar transferases"/>
    <property type="match status" value="1"/>
</dbReference>
<organism>
    <name type="scientific">Chlamydia pneumoniae</name>
    <name type="common">Chlamydophila pneumoniae</name>
    <dbReference type="NCBI Taxonomy" id="83558"/>
    <lineage>
        <taxon>Bacteria</taxon>
        <taxon>Pseudomonadati</taxon>
        <taxon>Chlamydiota</taxon>
        <taxon>Chlamydiia</taxon>
        <taxon>Chlamydiales</taxon>
        <taxon>Chlamydiaceae</taxon>
        <taxon>Chlamydia/Chlamydophila group</taxon>
        <taxon>Chlamydia</taxon>
    </lineage>
</organism>